<proteinExistence type="inferred from homology"/>
<feature type="chain" id="PRO_0000133214" description="Regulatory protein E2">
    <location>
        <begin position="1"/>
        <end position="345"/>
    </location>
</feature>
<feature type="region of interest" description="Transactivation domain" evidence="1">
    <location>
        <begin position="1"/>
        <end position="202"/>
    </location>
</feature>
<feature type="region of interest" description="Disordered" evidence="2">
    <location>
        <begin position="215"/>
        <end position="237"/>
    </location>
</feature>
<feature type="region of interest" description="DNA-binding domain" evidence="1">
    <location>
        <begin position="266"/>
        <end position="345"/>
    </location>
</feature>
<feature type="cross-link" description="Glycyl lysine isopeptide (Lys-Gly) (interchain with G-Cter in SUMO)" evidence="1">
    <location>
        <position position="272"/>
    </location>
</feature>
<sequence>MMETLCKRLSACQDAILELYERDSIHLSDHIDHWKHVRLENVLLHKAREMGLQSVNQQAVPSLAVSRSKGHNAIELQLALESLNESSYNTEEWTLQQTSWEQWVTDPKQCFKKGGKTVEVRYDCDKDNTMQYVVWTFVYYWLEGKWYKVSSHVDYNGIYYETQDNEKVYYTQFDRDAKRYGVKGIWDVCMGGKVICFAPVFSPCEVSTPEIVRPLHTSNSSNAQDAGVPTRKRHRQCDPDEGPLDFVHNLQPTTDSSTQCTLHNVAPIVHLKGDKNSLKCLRYRMHKGYSHLFNNVTTTWHWTNNTNSKCGVITFMFSSTSQQKQFLQCAKIPPTISVSSGYMSI</sequence>
<evidence type="ECO:0000255" key="1">
    <source>
        <dbReference type="HAMAP-Rule" id="MF_04001"/>
    </source>
</evidence>
<evidence type="ECO:0000256" key="2">
    <source>
        <dbReference type="SAM" id="MobiDB-lite"/>
    </source>
</evidence>
<keyword id="KW-0010">Activator</keyword>
<keyword id="KW-0235">DNA replication</keyword>
<keyword id="KW-0238">DNA-binding</keyword>
<keyword id="KW-0244">Early protein</keyword>
<keyword id="KW-1048">Host nucleus</keyword>
<keyword id="KW-1017">Isopeptide bond</keyword>
<keyword id="KW-0597">Phosphoprotein</keyword>
<keyword id="KW-1185">Reference proteome</keyword>
<keyword id="KW-0678">Repressor</keyword>
<keyword id="KW-0804">Transcription</keyword>
<keyword id="KW-0805">Transcription regulation</keyword>
<keyword id="KW-0832">Ubl conjugation</keyword>
<comment type="function">
    <text evidence="1">Plays a role in the initiation of viral DNA replication. A dimer of E2 interacts with a dimer of E1 in order to improve specificity of E1 DNA binding activity. Once the complex recognizes and binds DNA at specific sites, the E2 dimer is removed from DNA. E2 also regulates viral transcription through binding to the E2RE response element (5'-ACCNNNNNNGGT-3') present in multiple copies in the regulatory regions of the viral genome. Activates or represses transcription depending on E2RE's position with regards to proximal promoter elements including the TATA-box. Repression occurs by sterically hindering the assembly of the transcription initiation complex.</text>
</comment>
<comment type="subunit">
    <text evidence="1">Binds DNA as homodimer. Interacts with protein E1; this interaction greatly increases E1 DNA-binding activity. Interacts with protein L1; this interaction enhances E2-dependent replication and transcription activation. Interacts with protein L2; this interaction inhibits E2 transcriptional activity but not DNA replication function E2. Interacts with protein E7; this interaction inhibits E7 oncogenic activity. Interacts with host TAF1; this interaction modulates E2-dependent transcriptional regulation. Interacts with host BRD4; this interaction mediates E2 transcriptional activation function. Additionally, the interaction with host BRD4 on mitotic chromosomes mediates tethering of the viral genome. Interacts with host TOPBP1; this interaction is required for optimal viral DNA replication.</text>
</comment>
<comment type="subcellular location">
    <subcellularLocation>
        <location evidence="1">Host nucleus</location>
    </subcellularLocation>
</comment>
<comment type="PTM">
    <text evidence="1">Phosphorylated.</text>
</comment>
<comment type="PTM">
    <text evidence="1">Sumoylation plays a regulatory role in E2 transcriptional activity.</text>
</comment>
<comment type="similarity">
    <text evidence="1">Belongs to the papillomaviridae E2 protein family.</text>
</comment>
<reference key="1">
    <citation type="journal article" date="1994" name="Curr. Top. Microbiol. Immunol.">
        <title>Primer-directed sequencing of human papillomavirus types.</title>
        <authorList>
            <person name="Delius H."/>
            <person name="Hofmann B."/>
        </authorList>
    </citation>
    <scope>NUCLEOTIDE SEQUENCE [GENOMIC DNA]</scope>
</reference>
<protein>
    <recommendedName>
        <fullName evidence="1">Regulatory protein E2</fullName>
    </recommendedName>
</protein>
<organismHost>
    <name type="scientific">Homo sapiens</name>
    <name type="common">Human</name>
    <dbReference type="NCBI Taxonomy" id="9606"/>
</organismHost>
<name>VE2_HPV34</name>
<organism>
    <name type="scientific">Human papillomavirus type 34</name>
    <dbReference type="NCBI Taxonomy" id="333764"/>
    <lineage>
        <taxon>Viruses</taxon>
        <taxon>Monodnaviria</taxon>
        <taxon>Shotokuvirae</taxon>
        <taxon>Cossaviricota</taxon>
        <taxon>Papovaviricetes</taxon>
        <taxon>Zurhausenvirales</taxon>
        <taxon>Papillomaviridae</taxon>
        <taxon>Firstpapillomavirinae</taxon>
        <taxon>Alphapapillomavirus</taxon>
        <taxon>Alphapapillomavirus 11</taxon>
    </lineage>
</organism>
<gene>
    <name evidence="1" type="primary">E2</name>
</gene>
<dbReference type="EMBL" id="X74476">
    <property type="protein sequence ID" value="CAA52558.1"/>
    <property type="molecule type" value="Genomic_DNA"/>
</dbReference>
<dbReference type="PIR" id="S36518">
    <property type="entry name" value="S36518"/>
</dbReference>
<dbReference type="RefSeq" id="NP_041810.1">
    <property type="nucleotide sequence ID" value="NC_001587.1"/>
</dbReference>
<dbReference type="SMR" id="P36792"/>
<dbReference type="GeneID" id="1489430"/>
<dbReference type="KEGG" id="vg:1489430"/>
<dbReference type="OrthoDB" id="15886at10239"/>
<dbReference type="Proteomes" id="UP000009171">
    <property type="component" value="Genome"/>
</dbReference>
<dbReference type="GO" id="GO:0042025">
    <property type="term" value="C:host cell nucleus"/>
    <property type="evidence" value="ECO:0007669"/>
    <property type="project" value="UniProtKB-SubCell"/>
</dbReference>
<dbReference type="GO" id="GO:0003677">
    <property type="term" value="F:DNA binding"/>
    <property type="evidence" value="ECO:0007669"/>
    <property type="project" value="UniProtKB-UniRule"/>
</dbReference>
<dbReference type="GO" id="GO:0003700">
    <property type="term" value="F:DNA-binding transcription factor activity"/>
    <property type="evidence" value="ECO:0007669"/>
    <property type="project" value="UniProtKB-UniRule"/>
</dbReference>
<dbReference type="GO" id="GO:0000166">
    <property type="term" value="F:nucleotide binding"/>
    <property type="evidence" value="ECO:0007669"/>
    <property type="project" value="UniProtKB-UniRule"/>
</dbReference>
<dbReference type="GO" id="GO:0006260">
    <property type="term" value="P:DNA replication"/>
    <property type="evidence" value="ECO:0007669"/>
    <property type="project" value="UniProtKB-KW"/>
</dbReference>
<dbReference type="GO" id="GO:0006351">
    <property type="term" value="P:DNA-templated transcription"/>
    <property type="evidence" value="ECO:0007669"/>
    <property type="project" value="UniProtKB-UniRule"/>
</dbReference>
<dbReference type="GO" id="GO:0006275">
    <property type="term" value="P:regulation of DNA replication"/>
    <property type="evidence" value="ECO:0007669"/>
    <property type="project" value="UniProtKB-UniRule"/>
</dbReference>
<dbReference type="GO" id="GO:0039693">
    <property type="term" value="P:viral DNA genome replication"/>
    <property type="evidence" value="ECO:0007669"/>
    <property type="project" value="UniProtKB-UniRule"/>
</dbReference>
<dbReference type="Gene3D" id="3.30.70.330">
    <property type="match status" value="1"/>
</dbReference>
<dbReference type="Gene3D" id="1.10.287.30">
    <property type="entry name" value="E2 (early) protein, N terminal domain, subdomain 1"/>
    <property type="match status" value="1"/>
</dbReference>
<dbReference type="Gene3D" id="2.170.200.10">
    <property type="entry name" value="Papillomavirus E2 early protein domain"/>
    <property type="match status" value="1"/>
</dbReference>
<dbReference type="HAMAP" id="MF_04001">
    <property type="entry name" value="PPV_E2"/>
    <property type="match status" value="1"/>
</dbReference>
<dbReference type="InterPro" id="IPR035975">
    <property type="entry name" value="E2/EBNA1_C_sf"/>
</dbReference>
<dbReference type="InterPro" id="IPR012677">
    <property type="entry name" value="Nucleotide-bd_a/b_plait_sf"/>
</dbReference>
<dbReference type="InterPro" id="IPR000427">
    <property type="entry name" value="Papillomavirus_E2_C"/>
</dbReference>
<dbReference type="InterPro" id="IPR001866">
    <property type="entry name" value="PPV_E2_N"/>
</dbReference>
<dbReference type="InterPro" id="IPR033668">
    <property type="entry name" value="Reg_prot_E2"/>
</dbReference>
<dbReference type="InterPro" id="IPR036050">
    <property type="entry name" value="Regulatory_protein_E2_N"/>
</dbReference>
<dbReference type="InterPro" id="IPR042503">
    <property type="entry name" value="Regulatory_protein_E2_N_1"/>
</dbReference>
<dbReference type="InterPro" id="IPR042504">
    <property type="entry name" value="Regulatory_protein_E2_N_2"/>
</dbReference>
<dbReference type="Pfam" id="PF00511">
    <property type="entry name" value="PPV_E2_C"/>
    <property type="match status" value="1"/>
</dbReference>
<dbReference type="Pfam" id="PF00508">
    <property type="entry name" value="PPV_E2_N"/>
    <property type="match status" value="1"/>
</dbReference>
<dbReference type="SUPFAM" id="SSF51332">
    <property type="entry name" value="E2 regulatory, transactivation domain"/>
    <property type="match status" value="1"/>
</dbReference>
<dbReference type="SUPFAM" id="SSF54957">
    <property type="entry name" value="Viral DNA-binding domain"/>
    <property type="match status" value="1"/>
</dbReference>
<accession>P36792</accession>